<reference key="1">
    <citation type="journal article" date="2009" name="PLoS Genet.">
        <title>Organised genome dynamics in the Escherichia coli species results in highly diverse adaptive paths.</title>
        <authorList>
            <person name="Touchon M."/>
            <person name="Hoede C."/>
            <person name="Tenaillon O."/>
            <person name="Barbe V."/>
            <person name="Baeriswyl S."/>
            <person name="Bidet P."/>
            <person name="Bingen E."/>
            <person name="Bonacorsi S."/>
            <person name="Bouchier C."/>
            <person name="Bouvet O."/>
            <person name="Calteau A."/>
            <person name="Chiapello H."/>
            <person name="Clermont O."/>
            <person name="Cruveiller S."/>
            <person name="Danchin A."/>
            <person name="Diard M."/>
            <person name="Dossat C."/>
            <person name="Karoui M.E."/>
            <person name="Frapy E."/>
            <person name="Garry L."/>
            <person name="Ghigo J.M."/>
            <person name="Gilles A.M."/>
            <person name="Johnson J."/>
            <person name="Le Bouguenec C."/>
            <person name="Lescat M."/>
            <person name="Mangenot S."/>
            <person name="Martinez-Jehanne V."/>
            <person name="Matic I."/>
            <person name="Nassif X."/>
            <person name="Oztas S."/>
            <person name="Petit M.A."/>
            <person name="Pichon C."/>
            <person name="Rouy Z."/>
            <person name="Ruf C.S."/>
            <person name="Schneider D."/>
            <person name="Tourret J."/>
            <person name="Vacherie B."/>
            <person name="Vallenet D."/>
            <person name="Medigue C."/>
            <person name="Rocha E.P.C."/>
            <person name="Denamur E."/>
        </authorList>
    </citation>
    <scope>NUCLEOTIDE SEQUENCE [LARGE SCALE GENOMIC DNA]</scope>
    <source>
        <strain>ED1a</strain>
    </source>
</reference>
<sequence length="293" mass="31957">MMRIALFLLTNLAVMVVFGLVLSLTGIQSSSVQGLMIMALLFGFGGSFVSLLMSKWMALRSVGGEVIEQPRNERERWLVNTVATQARQAGIAMPQVAIYHAPDINAFATGARRDASLVAVSTGLLQNMSPDEAEAVIAHEISHIANGDMVTMTLIQGVVNTFVIFISRILAQLAAGFMGGNRDEGEESNGNPLIYFAVATVLELVFGILASIITMWFSRHREFHADAGSAKLVGREKMIAALQRLKTSYEPQEATSMMAFCINGKSKSLSELFMTHPPLDKRIEALRTGEYLK</sequence>
<accession>B7MVV9</accession>
<dbReference type="EC" id="3.4.24.-" evidence="1"/>
<dbReference type="EMBL" id="CU928162">
    <property type="protein sequence ID" value="CAR08225.2"/>
    <property type="molecule type" value="Genomic_DNA"/>
</dbReference>
<dbReference type="RefSeq" id="WP_000984517.1">
    <property type="nucleotide sequence ID" value="NC_011745.1"/>
</dbReference>
<dbReference type="SMR" id="B7MVV9"/>
<dbReference type="MEROPS" id="M48.002"/>
<dbReference type="GeneID" id="93776079"/>
<dbReference type="KEGG" id="ecq:ECED1_2033"/>
<dbReference type="HOGENOM" id="CLU_042266_1_0_6"/>
<dbReference type="Proteomes" id="UP000000748">
    <property type="component" value="Chromosome"/>
</dbReference>
<dbReference type="GO" id="GO:0005886">
    <property type="term" value="C:plasma membrane"/>
    <property type="evidence" value="ECO:0007669"/>
    <property type="project" value="UniProtKB-SubCell"/>
</dbReference>
<dbReference type="GO" id="GO:0004222">
    <property type="term" value="F:metalloendopeptidase activity"/>
    <property type="evidence" value="ECO:0007669"/>
    <property type="project" value="UniProtKB-UniRule"/>
</dbReference>
<dbReference type="GO" id="GO:0008270">
    <property type="term" value="F:zinc ion binding"/>
    <property type="evidence" value="ECO:0007669"/>
    <property type="project" value="UniProtKB-UniRule"/>
</dbReference>
<dbReference type="GO" id="GO:0006508">
    <property type="term" value="P:proteolysis"/>
    <property type="evidence" value="ECO:0007669"/>
    <property type="project" value="UniProtKB-KW"/>
</dbReference>
<dbReference type="CDD" id="cd07335">
    <property type="entry name" value="M48B_HtpX_like"/>
    <property type="match status" value="1"/>
</dbReference>
<dbReference type="FunFam" id="3.30.2010.10:FF:000001">
    <property type="entry name" value="Protease HtpX"/>
    <property type="match status" value="1"/>
</dbReference>
<dbReference type="Gene3D" id="3.30.2010.10">
    <property type="entry name" value="Metalloproteases ('zincins'), catalytic domain"/>
    <property type="match status" value="1"/>
</dbReference>
<dbReference type="HAMAP" id="MF_00188">
    <property type="entry name" value="Pept_M48_protease_HtpX"/>
    <property type="match status" value="1"/>
</dbReference>
<dbReference type="InterPro" id="IPR050083">
    <property type="entry name" value="HtpX_protease"/>
</dbReference>
<dbReference type="InterPro" id="IPR022919">
    <property type="entry name" value="Pept_M48_protease_HtpX"/>
</dbReference>
<dbReference type="InterPro" id="IPR001915">
    <property type="entry name" value="Peptidase_M48"/>
</dbReference>
<dbReference type="NCBIfam" id="NF003965">
    <property type="entry name" value="PRK05457.1"/>
    <property type="match status" value="1"/>
</dbReference>
<dbReference type="PANTHER" id="PTHR43221">
    <property type="entry name" value="PROTEASE HTPX"/>
    <property type="match status" value="1"/>
</dbReference>
<dbReference type="PANTHER" id="PTHR43221:SF1">
    <property type="entry name" value="PROTEASE HTPX"/>
    <property type="match status" value="1"/>
</dbReference>
<dbReference type="Pfam" id="PF01435">
    <property type="entry name" value="Peptidase_M48"/>
    <property type="match status" value="1"/>
</dbReference>
<keyword id="KW-0997">Cell inner membrane</keyword>
<keyword id="KW-1003">Cell membrane</keyword>
<keyword id="KW-0378">Hydrolase</keyword>
<keyword id="KW-0472">Membrane</keyword>
<keyword id="KW-0479">Metal-binding</keyword>
<keyword id="KW-0482">Metalloprotease</keyword>
<keyword id="KW-0645">Protease</keyword>
<keyword id="KW-0812">Transmembrane</keyword>
<keyword id="KW-1133">Transmembrane helix</keyword>
<keyword id="KW-0862">Zinc</keyword>
<gene>
    <name evidence="1" type="primary">htpX</name>
    <name type="ordered locus">ECED1_2033</name>
</gene>
<proteinExistence type="inferred from homology"/>
<feature type="chain" id="PRO_1000124229" description="Protease HtpX">
    <location>
        <begin position="1"/>
        <end position="293"/>
    </location>
</feature>
<feature type="transmembrane region" description="Helical" evidence="1">
    <location>
        <begin position="4"/>
        <end position="24"/>
    </location>
</feature>
<feature type="transmembrane region" description="Helical" evidence="1">
    <location>
        <begin position="34"/>
        <end position="54"/>
    </location>
</feature>
<feature type="transmembrane region" description="Helical" evidence="1">
    <location>
        <begin position="158"/>
        <end position="178"/>
    </location>
</feature>
<feature type="transmembrane region" description="Helical" evidence="1">
    <location>
        <begin position="193"/>
        <end position="213"/>
    </location>
</feature>
<feature type="active site" evidence="1">
    <location>
        <position position="140"/>
    </location>
</feature>
<feature type="binding site" evidence="1">
    <location>
        <position position="139"/>
    </location>
    <ligand>
        <name>Zn(2+)</name>
        <dbReference type="ChEBI" id="CHEBI:29105"/>
        <note>catalytic</note>
    </ligand>
</feature>
<feature type="binding site" evidence="1">
    <location>
        <position position="143"/>
    </location>
    <ligand>
        <name>Zn(2+)</name>
        <dbReference type="ChEBI" id="CHEBI:29105"/>
        <note>catalytic</note>
    </ligand>
</feature>
<feature type="binding site" evidence="1">
    <location>
        <position position="222"/>
    </location>
    <ligand>
        <name>Zn(2+)</name>
        <dbReference type="ChEBI" id="CHEBI:29105"/>
        <note>catalytic</note>
    </ligand>
</feature>
<evidence type="ECO:0000255" key="1">
    <source>
        <dbReference type="HAMAP-Rule" id="MF_00188"/>
    </source>
</evidence>
<name>HTPX_ECO81</name>
<comment type="cofactor">
    <cofactor evidence="1">
        <name>Zn(2+)</name>
        <dbReference type="ChEBI" id="CHEBI:29105"/>
    </cofactor>
    <text evidence="1">Binds 1 zinc ion per subunit.</text>
</comment>
<comment type="subcellular location">
    <subcellularLocation>
        <location evidence="1">Cell inner membrane</location>
        <topology evidence="1">Multi-pass membrane protein</topology>
    </subcellularLocation>
</comment>
<comment type="similarity">
    <text evidence="1">Belongs to the peptidase M48B family.</text>
</comment>
<organism>
    <name type="scientific">Escherichia coli O81 (strain ED1a)</name>
    <dbReference type="NCBI Taxonomy" id="585397"/>
    <lineage>
        <taxon>Bacteria</taxon>
        <taxon>Pseudomonadati</taxon>
        <taxon>Pseudomonadota</taxon>
        <taxon>Gammaproteobacteria</taxon>
        <taxon>Enterobacterales</taxon>
        <taxon>Enterobacteriaceae</taxon>
        <taxon>Escherichia</taxon>
    </lineage>
</organism>
<protein>
    <recommendedName>
        <fullName evidence="1">Protease HtpX</fullName>
        <ecNumber evidence="1">3.4.24.-</ecNumber>
    </recommendedName>
    <alternativeName>
        <fullName evidence="1">Heat shock protein HtpX</fullName>
    </alternativeName>
</protein>